<keyword id="KW-0025">Alternative splicing</keyword>
<keyword id="KW-0175">Coiled coil</keyword>
<keyword id="KW-0225">Disease variant</keyword>
<keyword id="KW-0344">Guanine-nucleotide releasing factor</keyword>
<keyword id="KW-0488">Methylation</keyword>
<keyword id="KW-0597">Phosphoprotein</keyword>
<keyword id="KW-1267">Proteomics identification</keyword>
<keyword id="KW-1185">Reference proteome</keyword>
<accession>O15013</accession>
<accession>O14665</accession>
<accession>Q2KHR8</accession>
<accession>Q68D55</accession>
<accession>Q8IWD9</accession>
<accession>Q8IY77</accession>
<feature type="chain" id="PRO_0000080926" description="Rho guanine nucleotide exchange factor 10">
    <location>
        <begin position="1"/>
        <end position="1369"/>
    </location>
</feature>
<feature type="domain" description="DH" evidence="3">
    <location>
        <begin position="421"/>
        <end position="608"/>
    </location>
</feature>
<feature type="region of interest" description="Disordered" evidence="4">
    <location>
        <begin position="1"/>
        <end position="106"/>
    </location>
</feature>
<feature type="region of interest" description="Disordered" evidence="4">
    <location>
        <begin position="184"/>
        <end position="254"/>
    </location>
</feature>
<feature type="region of interest" description="Disordered" evidence="4">
    <location>
        <begin position="1226"/>
        <end position="1260"/>
    </location>
</feature>
<feature type="region of interest" description="Disordered" evidence="4">
    <location>
        <begin position="1277"/>
        <end position="1297"/>
    </location>
</feature>
<feature type="coiled-coil region" evidence="2">
    <location>
        <begin position="304"/>
        <end position="355"/>
    </location>
</feature>
<feature type="compositionally biased region" description="Acidic residues" evidence="4">
    <location>
        <begin position="46"/>
        <end position="64"/>
    </location>
</feature>
<feature type="compositionally biased region" description="Low complexity" evidence="4">
    <location>
        <begin position="83"/>
        <end position="100"/>
    </location>
</feature>
<feature type="compositionally biased region" description="Polar residues" evidence="4">
    <location>
        <begin position="196"/>
        <end position="209"/>
    </location>
</feature>
<feature type="compositionally biased region" description="Low complexity" evidence="4">
    <location>
        <begin position="1279"/>
        <end position="1296"/>
    </location>
</feature>
<feature type="modified residue" description="Phosphoserine" evidence="1">
    <location>
        <position position="180"/>
    </location>
</feature>
<feature type="modified residue" description="Phosphoserine" evidence="14 15">
    <location>
        <position position="379"/>
    </location>
</feature>
<feature type="modified residue" description="Phosphoserine" evidence="13">
    <location>
        <position position="1287"/>
    </location>
</feature>
<feature type="modified residue" description="N5-methylglutamine" evidence="7">
    <location>
        <position position="1338"/>
    </location>
</feature>
<feature type="splice variant" id="VSP_040754" description="In isoform 3 and isoform 5." evidence="8 10">
    <location>
        <begin position="1"/>
        <end position="24"/>
    </location>
</feature>
<feature type="splice variant" id="VSP_040755" description="In isoform 5." evidence="10">
    <location>
        <position position="185"/>
    </location>
</feature>
<feature type="splice variant" id="VSP_040756" description="In isoform 3." evidence="8">
    <location>
        <begin position="307"/>
        <end position="345"/>
    </location>
</feature>
<feature type="splice variant" id="VSP_040757" description="In isoform 2." evidence="9">
    <location>
        <position position="545"/>
    </location>
</feature>
<feature type="splice variant" id="VSP_010704" description="In isoform 4." evidence="11">
    <location>
        <begin position="897"/>
        <end position="925"/>
    </location>
</feature>
<feature type="sequence variant" id="VAR_073288" description="Found in a patient with hereditary motor and sensory neuropathy; uncertain significance; dbSNP:rs767902219." evidence="6">
    <original>N</original>
    <variation>H</variation>
    <location>
        <position position="227"/>
    </location>
</feature>
<feature type="sequence variant" id="VAR_019118" description="In SNCV; dbSNP:rs28940281." evidence="5">
    <original>T</original>
    <variation>I</variation>
    <location>
        <position position="357"/>
    </location>
</feature>
<feature type="sequence variant" id="VAR_038603" description="In dbSNP:rs2294039.">
    <original>V</original>
    <variation>I</variation>
    <location>
        <position position="700"/>
    </location>
</feature>
<feature type="sequence variant" id="VAR_057188" description="In dbSNP:rs2294039.">
    <original>V</original>
    <variation>I</variation>
    <location>
        <position position="725"/>
    </location>
</feature>
<feature type="mutagenesis site" description="Abolishes methylation by N6AMT1." evidence="7">
    <original>Q</original>
    <variation>R</variation>
    <location>
        <position position="1338"/>
    </location>
</feature>
<feature type="sequence conflict" description="In Ref. 5; AAI12927." evidence="12" ref="5">
    <original>L</original>
    <variation>F</variation>
    <location>
        <position position="395"/>
    </location>
</feature>
<feature type="sequence conflict" description="In Ref. 5; AAH40474." evidence="12" ref="5">
    <original>D</original>
    <variation>V</variation>
    <location>
        <position position="500"/>
    </location>
</feature>
<feature type="sequence conflict" description="In Ref. 6; AAB71662." evidence="12" ref="6">
    <original>T</original>
    <variation>S</variation>
    <location>
        <position position="1024"/>
    </location>
</feature>
<feature type="sequence conflict" description="In Ref. 6; AAB71662." evidence="12" ref="6">
    <original>S</original>
    <variation>T</variation>
    <location>
        <position position="1046"/>
    </location>
</feature>
<gene>
    <name type="primary">ARHGEF10</name>
    <name type="synonym">KIAA0294</name>
</gene>
<dbReference type="EMBL" id="CR749570">
    <property type="protein sequence ID" value="CAH18365.1"/>
    <property type="status" value="ALT_TERM"/>
    <property type="molecule type" value="mRNA"/>
</dbReference>
<dbReference type="EMBL" id="AB002292">
    <property type="protein sequence ID" value="BAA20754.2"/>
    <property type="status" value="ALT_INIT"/>
    <property type="molecule type" value="mRNA"/>
</dbReference>
<dbReference type="EMBL" id="AC019257">
    <property type="status" value="NOT_ANNOTATED_CDS"/>
    <property type="molecule type" value="Genomic_DNA"/>
</dbReference>
<dbReference type="EMBL" id="BC036809">
    <property type="protein sequence ID" value="AAH36809.1"/>
    <property type="status" value="ALT_SEQ"/>
    <property type="molecule type" value="mRNA"/>
</dbReference>
<dbReference type="EMBL" id="BC040474">
    <property type="protein sequence ID" value="AAH40474.1"/>
    <property type="status" value="ALT_SEQ"/>
    <property type="molecule type" value="mRNA"/>
</dbReference>
<dbReference type="EMBL" id="BC112926">
    <property type="protein sequence ID" value="AAI12927.1"/>
    <property type="molecule type" value="mRNA"/>
</dbReference>
<dbReference type="EMBL" id="AF009205">
    <property type="protein sequence ID" value="AAB71662.1"/>
    <property type="molecule type" value="mRNA"/>
</dbReference>
<dbReference type="CCDS" id="CCDS34794.1">
    <molecule id="O15013-5"/>
</dbReference>
<dbReference type="CCDS" id="CCDS78296.1">
    <molecule id="O15013-6"/>
</dbReference>
<dbReference type="CCDS" id="CCDS78297.1">
    <molecule id="O15013-7"/>
</dbReference>
<dbReference type="PIR" id="T03307">
    <property type="entry name" value="T03307"/>
</dbReference>
<dbReference type="RefSeq" id="NP_001295081.1">
    <molecule id="O15013-7"/>
    <property type="nucleotide sequence ID" value="NM_001308152.2"/>
</dbReference>
<dbReference type="RefSeq" id="NP_001295082.1">
    <molecule id="O15013-6"/>
    <property type="nucleotide sequence ID" value="NM_001308153.2"/>
</dbReference>
<dbReference type="RefSeq" id="NP_055444.2">
    <molecule id="O15013-5"/>
    <property type="nucleotide sequence ID" value="NM_014629.4"/>
</dbReference>
<dbReference type="RefSeq" id="XP_016869492.1">
    <molecule id="O15013-1"/>
    <property type="nucleotide sequence ID" value="XM_017014003.2"/>
</dbReference>
<dbReference type="RefSeq" id="XP_047278405.1">
    <molecule id="O15013-7"/>
    <property type="nucleotide sequence ID" value="XM_047422449.1"/>
</dbReference>
<dbReference type="RefSeq" id="XP_047278408.1">
    <molecule id="O15013-5"/>
    <property type="nucleotide sequence ID" value="XM_047422452.1"/>
</dbReference>
<dbReference type="RefSeq" id="XP_047278410.1">
    <molecule id="O15013-7"/>
    <property type="nucleotide sequence ID" value="XM_047422454.1"/>
</dbReference>
<dbReference type="RefSeq" id="XP_054184798.1">
    <molecule id="O15013-1"/>
    <property type="nucleotide sequence ID" value="XM_054328823.1"/>
</dbReference>
<dbReference type="RefSeq" id="XP_054184799.1">
    <molecule id="O15013-7"/>
    <property type="nucleotide sequence ID" value="XM_054328824.1"/>
</dbReference>
<dbReference type="RefSeq" id="XP_054184804.1">
    <molecule id="O15013-5"/>
    <property type="nucleotide sequence ID" value="XM_054328829.1"/>
</dbReference>
<dbReference type="RefSeq" id="XP_054184806.1">
    <molecule id="O15013-7"/>
    <property type="nucleotide sequence ID" value="XM_054328831.1"/>
</dbReference>
<dbReference type="RefSeq" id="XP_054217514.1">
    <molecule id="O15013-1"/>
    <property type="nucleotide sequence ID" value="XM_054361539.1"/>
</dbReference>
<dbReference type="RefSeq" id="XP_054217515.1">
    <molecule id="O15013-7"/>
    <property type="nucleotide sequence ID" value="XM_054361540.1"/>
</dbReference>
<dbReference type="RefSeq" id="XP_054217520.1">
    <molecule id="O15013-5"/>
    <property type="nucleotide sequence ID" value="XM_054361545.1"/>
</dbReference>
<dbReference type="RefSeq" id="XP_054217522.1">
    <molecule id="O15013-7"/>
    <property type="nucleotide sequence ID" value="XM_054361547.1"/>
</dbReference>
<dbReference type="SMR" id="O15013"/>
<dbReference type="BioGRID" id="114998">
    <property type="interactions" value="108"/>
</dbReference>
<dbReference type="FunCoup" id="O15013">
    <property type="interactions" value="796"/>
</dbReference>
<dbReference type="IntAct" id="O15013">
    <property type="interactions" value="53"/>
</dbReference>
<dbReference type="STRING" id="9606.ENSP00000431012"/>
<dbReference type="GlyGen" id="O15013">
    <property type="glycosylation" value="1 site"/>
</dbReference>
<dbReference type="iPTMnet" id="O15013"/>
<dbReference type="PhosphoSitePlus" id="O15013"/>
<dbReference type="BioMuta" id="ARHGEF10"/>
<dbReference type="jPOST" id="O15013"/>
<dbReference type="MassIVE" id="O15013"/>
<dbReference type="PaxDb" id="9606-ENSP00000340297"/>
<dbReference type="PeptideAtlas" id="O15013"/>
<dbReference type="ProteomicsDB" id="48364">
    <molecule id="O15013-1"/>
</dbReference>
<dbReference type="ProteomicsDB" id="48365">
    <molecule id="O15013-4"/>
</dbReference>
<dbReference type="ProteomicsDB" id="48366">
    <molecule id="O15013-5"/>
</dbReference>
<dbReference type="ProteomicsDB" id="48367">
    <molecule id="O15013-6"/>
</dbReference>
<dbReference type="ProteomicsDB" id="48368">
    <molecule id="O15013-7"/>
</dbReference>
<dbReference type="Pumba" id="O15013"/>
<dbReference type="Antibodypedia" id="8026">
    <property type="antibodies" value="167 antibodies from 31 providers"/>
</dbReference>
<dbReference type="DNASU" id="9639"/>
<dbReference type="Ensembl" id="ENST00000349830.8">
    <molecule id="O15013-5"/>
    <property type="protein sequence ID" value="ENSP00000340297.3"/>
    <property type="gene ID" value="ENSG00000104728.16"/>
</dbReference>
<dbReference type="Ensembl" id="ENST00000398564.5">
    <molecule id="O15013-1"/>
    <property type="protein sequence ID" value="ENSP00000381571.1"/>
    <property type="gene ID" value="ENSG00000104728.16"/>
</dbReference>
<dbReference type="Ensembl" id="ENST00000518288.5">
    <molecule id="O15013-6"/>
    <property type="protein sequence ID" value="ENSP00000431012.1"/>
    <property type="gene ID" value="ENSG00000104728.16"/>
</dbReference>
<dbReference type="Ensembl" id="ENST00000520359.5">
    <molecule id="O15013-7"/>
    <property type="protein sequence ID" value="ENSP00000427909.1"/>
    <property type="gene ID" value="ENSG00000104728.16"/>
</dbReference>
<dbReference type="Ensembl" id="ENST00000610399.4">
    <molecule id="O15013-1"/>
    <property type="protein sequence ID" value="ENSP00000481974.1"/>
    <property type="gene ID" value="ENSG00000274726.4"/>
</dbReference>
<dbReference type="Ensembl" id="ENST00000619613.4">
    <molecule id="O15013-5"/>
    <property type="protein sequence ID" value="ENSP00000477988.1"/>
    <property type="gene ID" value="ENSG00000274726.4"/>
</dbReference>
<dbReference type="Ensembl" id="ENST00000631758.1">
    <molecule id="O15013-7"/>
    <property type="protein sequence ID" value="ENSP00000488343.1"/>
    <property type="gene ID" value="ENSG00000274726.4"/>
</dbReference>
<dbReference type="Ensembl" id="ENST00000633616.1">
    <molecule id="O15013-6"/>
    <property type="protein sequence ID" value="ENSP00000488463.1"/>
    <property type="gene ID" value="ENSG00000274726.4"/>
</dbReference>
<dbReference type="GeneID" id="9639"/>
<dbReference type="KEGG" id="hsa:9639"/>
<dbReference type="MANE-Select" id="ENST00000349830.8">
    <molecule id="O15013-5"/>
    <property type="protein sequence ID" value="ENSP00000340297.3"/>
    <property type="RefSeq nucleotide sequence ID" value="NM_014629.4"/>
    <property type="RefSeq protein sequence ID" value="NP_055444.2"/>
</dbReference>
<dbReference type="UCSC" id="uc003wpr.4">
    <molecule id="O15013-1"/>
    <property type="organism name" value="human"/>
</dbReference>
<dbReference type="AGR" id="HGNC:14103"/>
<dbReference type="CTD" id="9639"/>
<dbReference type="DisGeNET" id="9639"/>
<dbReference type="GeneCards" id="ARHGEF10"/>
<dbReference type="GeneReviews" id="ARHGEF10"/>
<dbReference type="HGNC" id="HGNC:14103">
    <property type="gene designation" value="ARHGEF10"/>
</dbReference>
<dbReference type="HPA" id="ENSG00000104728">
    <property type="expression patterns" value="Low tissue specificity"/>
</dbReference>
<dbReference type="MalaCards" id="ARHGEF10"/>
<dbReference type="MIM" id="608136">
    <property type="type" value="gene"/>
</dbReference>
<dbReference type="MIM" id="608236">
    <property type="type" value="phenotype"/>
</dbReference>
<dbReference type="neXtProt" id="NX_O15013"/>
<dbReference type="OpenTargets" id="ENSG00000104728"/>
<dbReference type="Orphanet" id="140481">
    <property type="disease" value="Autosomal dominant slowed nerve conduction velocity"/>
</dbReference>
<dbReference type="PharmGKB" id="PA24967"/>
<dbReference type="VEuPathDB" id="HostDB:ENSG00000104728"/>
<dbReference type="eggNOG" id="KOG3522">
    <property type="taxonomic scope" value="Eukaryota"/>
</dbReference>
<dbReference type="GeneTree" id="ENSGT00940000153798"/>
<dbReference type="InParanoid" id="O15013"/>
<dbReference type="OMA" id="NSDSEPX"/>
<dbReference type="OrthoDB" id="28697at2759"/>
<dbReference type="PAN-GO" id="O15013">
    <property type="GO annotations" value="4 GO annotations based on evolutionary models"/>
</dbReference>
<dbReference type="PhylomeDB" id="O15013"/>
<dbReference type="TreeFam" id="TF331430"/>
<dbReference type="PathwayCommons" id="O15013"/>
<dbReference type="Reactome" id="R-HSA-193648">
    <property type="pathway name" value="NRAGE signals death through JNK"/>
</dbReference>
<dbReference type="Reactome" id="R-HSA-416482">
    <property type="pathway name" value="G alpha (12/13) signalling events"/>
</dbReference>
<dbReference type="Reactome" id="R-HSA-8980692">
    <property type="pathway name" value="RHOA GTPase cycle"/>
</dbReference>
<dbReference type="Reactome" id="R-HSA-9013026">
    <property type="pathway name" value="RHOB GTPase cycle"/>
</dbReference>
<dbReference type="Reactome" id="R-HSA-9013106">
    <property type="pathway name" value="RHOC GTPase cycle"/>
</dbReference>
<dbReference type="Reactome" id="R-HSA-9013148">
    <property type="pathway name" value="CDC42 GTPase cycle"/>
</dbReference>
<dbReference type="Reactome" id="R-HSA-9013149">
    <property type="pathway name" value="RAC1 GTPase cycle"/>
</dbReference>
<dbReference type="SignaLink" id="O15013"/>
<dbReference type="SIGNOR" id="O15013"/>
<dbReference type="BioGRID-ORCS" id="9639">
    <property type="hits" value="11 hits in 1158 CRISPR screens"/>
</dbReference>
<dbReference type="CD-CODE" id="8C2F96ED">
    <property type="entry name" value="Centrosome"/>
</dbReference>
<dbReference type="ChiTaRS" id="ARHGEF10">
    <property type="organism name" value="human"/>
</dbReference>
<dbReference type="GeneWiki" id="ARHGEF10"/>
<dbReference type="GenomeRNAi" id="9639"/>
<dbReference type="Pharos" id="O15013">
    <property type="development level" value="Tbio"/>
</dbReference>
<dbReference type="PRO" id="PR:O15013"/>
<dbReference type="Proteomes" id="UP000005640">
    <property type="component" value="Chromosome 8"/>
</dbReference>
<dbReference type="RNAct" id="O15013">
    <property type="molecule type" value="protein"/>
</dbReference>
<dbReference type="Bgee" id="ENSG00000104728">
    <property type="expression patterns" value="Expressed in sural nerve and 96 other cell types or tissues"/>
</dbReference>
<dbReference type="ExpressionAtlas" id="O15013">
    <property type="expression patterns" value="baseline and differential"/>
</dbReference>
<dbReference type="GO" id="GO:0005813">
    <property type="term" value="C:centrosome"/>
    <property type="evidence" value="ECO:0000314"/>
    <property type="project" value="BHF-UCL"/>
</dbReference>
<dbReference type="GO" id="GO:0005737">
    <property type="term" value="C:cytoplasm"/>
    <property type="evidence" value="ECO:0000318"/>
    <property type="project" value="GO_Central"/>
</dbReference>
<dbReference type="GO" id="GO:0005829">
    <property type="term" value="C:cytosol"/>
    <property type="evidence" value="ECO:0000304"/>
    <property type="project" value="Reactome"/>
</dbReference>
<dbReference type="GO" id="GO:0005085">
    <property type="term" value="F:guanyl-nucleotide exchange factor activity"/>
    <property type="evidence" value="ECO:0000314"/>
    <property type="project" value="BHF-UCL"/>
</dbReference>
<dbReference type="GO" id="GO:0019894">
    <property type="term" value="F:kinesin binding"/>
    <property type="evidence" value="ECO:0000353"/>
    <property type="project" value="BHF-UCL"/>
</dbReference>
<dbReference type="GO" id="GO:0030036">
    <property type="term" value="P:actin cytoskeleton organization"/>
    <property type="evidence" value="ECO:0000318"/>
    <property type="project" value="GO_Central"/>
</dbReference>
<dbReference type="GO" id="GO:0051298">
    <property type="term" value="P:centrosome duplication"/>
    <property type="evidence" value="ECO:0000315"/>
    <property type="project" value="BHF-UCL"/>
</dbReference>
<dbReference type="GO" id="GO:0090307">
    <property type="term" value="P:mitotic spindle assembly"/>
    <property type="evidence" value="ECO:0000315"/>
    <property type="project" value="BHF-UCL"/>
</dbReference>
<dbReference type="GO" id="GO:0022011">
    <property type="term" value="P:myelination in peripheral nervous system"/>
    <property type="evidence" value="ECO:0000315"/>
    <property type="project" value="BHF-UCL"/>
</dbReference>
<dbReference type="GO" id="GO:0035025">
    <property type="term" value="P:positive regulation of Rho protein signal transduction"/>
    <property type="evidence" value="ECO:0000314"/>
    <property type="project" value="BHF-UCL"/>
</dbReference>
<dbReference type="GO" id="GO:0051496">
    <property type="term" value="P:positive regulation of stress fiber assembly"/>
    <property type="evidence" value="ECO:0000315"/>
    <property type="project" value="BHF-UCL"/>
</dbReference>
<dbReference type="GO" id="GO:0051056">
    <property type="term" value="P:regulation of small GTPase mediated signal transduction"/>
    <property type="evidence" value="ECO:0000304"/>
    <property type="project" value="Reactome"/>
</dbReference>
<dbReference type="CDD" id="cd00160">
    <property type="entry name" value="RhoGEF"/>
    <property type="match status" value="1"/>
</dbReference>
<dbReference type="FunFam" id="2.130.10.10:FF:000340">
    <property type="entry name" value="Rho guanine nucleotide exchange factor (GEF) 10"/>
    <property type="match status" value="1"/>
</dbReference>
<dbReference type="FunFam" id="1.20.900.10:FF:000003">
    <property type="entry name" value="Rho guanine nucleotide exchange factor 10 like"/>
    <property type="match status" value="1"/>
</dbReference>
<dbReference type="Gene3D" id="1.20.900.10">
    <property type="entry name" value="Dbl homology (DH) domain"/>
    <property type="match status" value="1"/>
</dbReference>
<dbReference type="Gene3D" id="2.130.10.10">
    <property type="entry name" value="YVTN repeat-like/Quinoprotein amine dehydrogenase"/>
    <property type="match status" value="1"/>
</dbReference>
<dbReference type="InterPro" id="IPR039919">
    <property type="entry name" value="ARHGEF10/ARHGEF17"/>
</dbReference>
<dbReference type="InterPro" id="IPR035899">
    <property type="entry name" value="DBL_dom_sf"/>
</dbReference>
<dbReference type="InterPro" id="IPR000219">
    <property type="entry name" value="DH_dom"/>
</dbReference>
<dbReference type="InterPro" id="IPR015943">
    <property type="entry name" value="WD40/YVTN_repeat-like_dom_sf"/>
</dbReference>
<dbReference type="InterPro" id="IPR036322">
    <property type="entry name" value="WD40_repeat_dom_sf"/>
</dbReference>
<dbReference type="PANTHER" id="PTHR12877">
    <property type="entry name" value="RHO GUANINE NUCLEOTIDE EXCHANGE FACTOR"/>
    <property type="match status" value="1"/>
</dbReference>
<dbReference type="PANTHER" id="PTHR12877:SF14">
    <property type="entry name" value="RHO GUANINE NUCLEOTIDE EXCHANGE FACTOR 10"/>
    <property type="match status" value="1"/>
</dbReference>
<dbReference type="Pfam" id="PF19057">
    <property type="entry name" value="PH_19"/>
    <property type="match status" value="1"/>
</dbReference>
<dbReference type="Pfam" id="PF00621">
    <property type="entry name" value="RhoGEF"/>
    <property type="match status" value="1"/>
</dbReference>
<dbReference type="Pfam" id="PF19056">
    <property type="entry name" value="WD40_2"/>
    <property type="match status" value="1"/>
</dbReference>
<dbReference type="SMART" id="SM00325">
    <property type="entry name" value="RhoGEF"/>
    <property type="match status" value="1"/>
</dbReference>
<dbReference type="SUPFAM" id="SSF48065">
    <property type="entry name" value="DBL homology domain (DH-domain)"/>
    <property type="match status" value="1"/>
</dbReference>
<dbReference type="SUPFAM" id="SSF50729">
    <property type="entry name" value="PH domain-like"/>
    <property type="match status" value="1"/>
</dbReference>
<dbReference type="SUPFAM" id="SSF50978">
    <property type="entry name" value="WD40 repeat-like"/>
    <property type="match status" value="1"/>
</dbReference>
<dbReference type="PROSITE" id="PS50010">
    <property type="entry name" value="DH_2"/>
    <property type="match status" value="1"/>
</dbReference>
<protein>
    <recommendedName>
        <fullName>Rho guanine nucleotide exchange factor 10</fullName>
    </recommendedName>
</protein>
<evidence type="ECO:0000250" key="1">
    <source>
        <dbReference type="UniProtKB" id="Q8C033"/>
    </source>
</evidence>
<evidence type="ECO:0000255" key="2"/>
<evidence type="ECO:0000255" key="3">
    <source>
        <dbReference type="PROSITE-ProRule" id="PRU00062"/>
    </source>
</evidence>
<evidence type="ECO:0000256" key="4">
    <source>
        <dbReference type="SAM" id="MobiDB-lite"/>
    </source>
</evidence>
<evidence type="ECO:0000269" key="5">
    <source>
    </source>
</evidence>
<evidence type="ECO:0000269" key="6">
    <source>
    </source>
</evidence>
<evidence type="ECO:0000269" key="7">
    <source>
    </source>
</evidence>
<evidence type="ECO:0000303" key="8">
    <source>
    </source>
</evidence>
<evidence type="ECO:0000303" key="9">
    <source>
    </source>
</evidence>
<evidence type="ECO:0000303" key="10">
    <source>
    </source>
</evidence>
<evidence type="ECO:0000303" key="11">
    <source>
    </source>
</evidence>
<evidence type="ECO:0000305" key="12"/>
<evidence type="ECO:0007744" key="13">
    <source>
    </source>
</evidence>
<evidence type="ECO:0007744" key="14">
    <source>
    </source>
</evidence>
<evidence type="ECO:0007744" key="15">
    <source>
    </source>
</evidence>
<reference key="1">
    <citation type="journal article" date="2007" name="BMC Genomics">
        <title>The full-ORF clone resource of the German cDNA consortium.</title>
        <authorList>
            <person name="Bechtel S."/>
            <person name="Rosenfelder H."/>
            <person name="Duda A."/>
            <person name="Schmidt C.P."/>
            <person name="Ernst U."/>
            <person name="Wellenreuther R."/>
            <person name="Mehrle A."/>
            <person name="Schuster C."/>
            <person name="Bahr A."/>
            <person name="Bloecker H."/>
            <person name="Heubner D."/>
            <person name="Hoerlein A."/>
            <person name="Michel G."/>
            <person name="Wedler H."/>
            <person name="Koehrer K."/>
            <person name="Ottenwaelder B."/>
            <person name="Poustka A."/>
            <person name="Wiemann S."/>
            <person name="Schupp I."/>
        </authorList>
    </citation>
    <scope>NUCLEOTIDE SEQUENCE [LARGE SCALE MRNA] (ISOFORM 2)</scope>
    <source>
        <tissue>Testis</tissue>
    </source>
</reference>
<reference key="2">
    <citation type="journal article" date="1997" name="DNA Res.">
        <title>Prediction of the coding sequences of unidentified human genes. VII. The complete sequences of 100 new cDNA clones from brain which can code for large proteins in vitro.</title>
        <authorList>
            <person name="Nagase T."/>
            <person name="Ishikawa K."/>
            <person name="Nakajima D."/>
            <person name="Ohira M."/>
            <person name="Seki N."/>
            <person name="Miyajima N."/>
            <person name="Tanaka A."/>
            <person name="Kotani H."/>
            <person name="Nomura N."/>
            <person name="Ohara O."/>
        </authorList>
    </citation>
    <scope>NUCLEOTIDE SEQUENCE [LARGE SCALE MRNA] (ISOFORM 5)</scope>
    <source>
        <tissue>Brain</tissue>
    </source>
</reference>
<reference key="3">
    <citation type="journal article" date="2002" name="DNA Res.">
        <title>Construction of expression-ready cDNA clones for KIAA genes: manual curation of 330 KIAA cDNA clones.</title>
        <authorList>
            <person name="Nakajima D."/>
            <person name="Okazaki N."/>
            <person name="Yamakawa H."/>
            <person name="Kikuno R."/>
            <person name="Ohara O."/>
            <person name="Nagase T."/>
        </authorList>
    </citation>
    <scope>SEQUENCE REVISION</scope>
</reference>
<reference key="4">
    <citation type="journal article" date="2006" name="Nature">
        <title>DNA sequence and analysis of human chromosome 8.</title>
        <authorList>
            <person name="Nusbaum C."/>
            <person name="Mikkelsen T.S."/>
            <person name="Zody M.C."/>
            <person name="Asakawa S."/>
            <person name="Taudien S."/>
            <person name="Garber M."/>
            <person name="Kodira C.D."/>
            <person name="Schueler M.G."/>
            <person name="Shimizu A."/>
            <person name="Whittaker C.A."/>
            <person name="Chang J.L."/>
            <person name="Cuomo C.A."/>
            <person name="Dewar K."/>
            <person name="FitzGerald M.G."/>
            <person name="Yang X."/>
            <person name="Allen N.R."/>
            <person name="Anderson S."/>
            <person name="Asakawa T."/>
            <person name="Blechschmidt K."/>
            <person name="Bloom T."/>
            <person name="Borowsky M.L."/>
            <person name="Butler J."/>
            <person name="Cook A."/>
            <person name="Corum B."/>
            <person name="DeArellano K."/>
            <person name="DeCaprio D."/>
            <person name="Dooley K.T."/>
            <person name="Dorris L. III"/>
            <person name="Engels R."/>
            <person name="Gloeckner G."/>
            <person name="Hafez N."/>
            <person name="Hagopian D.S."/>
            <person name="Hall J.L."/>
            <person name="Ishikawa S.K."/>
            <person name="Jaffe D.B."/>
            <person name="Kamat A."/>
            <person name="Kudoh J."/>
            <person name="Lehmann R."/>
            <person name="Lokitsang T."/>
            <person name="Macdonald P."/>
            <person name="Major J.E."/>
            <person name="Matthews C.D."/>
            <person name="Mauceli E."/>
            <person name="Menzel U."/>
            <person name="Mihalev A.H."/>
            <person name="Minoshima S."/>
            <person name="Murayama Y."/>
            <person name="Naylor J.W."/>
            <person name="Nicol R."/>
            <person name="Nguyen C."/>
            <person name="O'Leary S.B."/>
            <person name="O'Neill K."/>
            <person name="Parker S.C.J."/>
            <person name="Polley A."/>
            <person name="Raymond C.K."/>
            <person name="Reichwald K."/>
            <person name="Rodriguez J."/>
            <person name="Sasaki T."/>
            <person name="Schilhabel M."/>
            <person name="Siddiqui R."/>
            <person name="Smith C.L."/>
            <person name="Sneddon T.P."/>
            <person name="Talamas J.A."/>
            <person name="Tenzin P."/>
            <person name="Topham K."/>
            <person name="Venkataraman V."/>
            <person name="Wen G."/>
            <person name="Yamazaki S."/>
            <person name="Young S.K."/>
            <person name="Zeng Q."/>
            <person name="Zimmer A.R."/>
            <person name="Rosenthal A."/>
            <person name="Birren B.W."/>
            <person name="Platzer M."/>
            <person name="Shimizu N."/>
            <person name="Lander E.S."/>
        </authorList>
    </citation>
    <scope>NUCLEOTIDE SEQUENCE [LARGE SCALE GENOMIC DNA]</scope>
</reference>
<reference key="5">
    <citation type="journal article" date="2004" name="Genome Res.">
        <title>The status, quality, and expansion of the NIH full-length cDNA project: the Mammalian Gene Collection (MGC).</title>
        <authorList>
            <consortium name="The MGC Project Team"/>
        </authorList>
    </citation>
    <scope>NUCLEOTIDE SEQUENCE [LARGE SCALE MRNA] (ISOFORM 3)</scope>
    <source>
        <tissue>Duodenum</tissue>
        <tissue>Prostate</tissue>
        <tissue>Uterus</tissue>
    </source>
</reference>
<reference key="6">
    <citation type="journal article" date="1997" name="Genome Res.">
        <title>High-resolution mapping and transcript identification at the progressive epilepsy with mental retardation locus on chromosome 8p.</title>
        <authorList>
            <person name="Ranta S."/>
            <person name="Lehesjoki A.-E."/>
            <person name="de Fatima Bonaldo M."/>
            <person name="Knowles J.A."/>
            <person name="Hirvasniemi A."/>
            <person name="Ross B."/>
            <person name="de Jong P.J."/>
            <person name="Soares M.B."/>
            <person name="de la Chapelle A."/>
            <person name="Gilliam T.C."/>
        </authorList>
    </citation>
    <scope>NUCLEOTIDE SEQUENCE [MRNA] OF 353-1369 (ISOFORM 4)</scope>
    <source>
        <tissue>Brain</tissue>
    </source>
</reference>
<reference key="7">
    <citation type="journal article" date="2003" name="Am. J. Hum. Genet.">
        <title>Slowed conduction and thin myelination of peripheral nerves associated with mutant rho Guanine-nucleotide exchange factor 10.</title>
        <authorList>
            <person name="Verhoeven K."/>
            <person name="De Jonghe P."/>
            <person name="Van de Putte T."/>
            <person name="Nelis E."/>
            <person name="Zwijsen A."/>
            <person name="Verpoorten N."/>
            <person name="De Vriendt E."/>
            <person name="Jacobs A."/>
            <person name="Van Gerwen V."/>
            <person name="Francis A."/>
            <person name="Ceuterick C."/>
            <person name="Huylebroeck D."/>
            <person name="Timmerman V."/>
        </authorList>
    </citation>
    <scope>FUNCTION</scope>
    <scope>VARIANT SNCV ILE-357</scope>
</reference>
<reference key="8">
    <citation type="journal article" date="2008" name="Proc. Natl. Acad. Sci. U.S.A.">
        <title>A quantitative atlas of mitotic phosphorylation.</title>
        <authorList>
            <person name="Dephoure N."/>
            <person name="Zhou C."/>
            <person name="Villen J."/>
            <person name="Beausoleil S.A."/>
            <person name="Bakalarski C.E."/>
            <person name="Elledge S.J."/>
            <person name="Gygi S.P."/>
        </authorList>
    </citation>
    <scope>PHOSPHORYLATION [LARGE SCALE ANALYSIS] AT SER-1287</scope>
    <scope>IDENTIFICATION BY MASS SPECTROMETRY [LARGE SCALE ANALYSIS]</scope>
    <source>
        <tissue>Cervix carcinoma</tissue>
    </source>
</reference>
<reference key="9">
    <citation type="journal article" date="2011" name="Sci. Signal.">
        <title>System-wide temporal characterization of the proteome and phosphoproteome of human embryonic stem cell differentiation.</title>
        <authorList>
            <person name="Rigbolt K.T."/>
            <person name="Prokhorova T.A."/>
            <person name="Akimov V."/>
            <person name="Henningsen J."/>
            <person name="Johansen P.T."/>
            <person name="Kratchmarova I."/>
            <person name="Kassem M."/>
            <person name="Mann M."/>
            <person name="Olsen J.V."/>
            <person name="Blagoev B."/>
        </authorList>
    </citation>
    <scope>PHOSPHORYLATION [LARGE SCALE ANALYSIS] AT SER-379</scope>
    <scope>IDENTIFICATION BY MASS SPECTROMETRY [LARGE SCALE ANALYSIS]</scope>
</reference>
<reference key="10">
    <citation type="journal article" date="2013" name="J. Proteome Res.">
        <title>Toward a comprehensive characterization of a human cancer cell phosphoproteome.</title>
        <authorList>
            <person name="Zhou H."/>
            <person name="Di Palma S."/>
            <person name="Preisinger C."/>
            <person name="Peng M."/>
            <person name="Polat A.N."/>
            <person name="Heck A.J."/>
            <person name="Mohammed S."/>
        </authorList>
    </citation>
    <scope>PHOSPHORYLATION [LARGE SCALE ANALYSIS] AT SER-379</scope>
    <scope>IDENTIFICATION BY MASS SPECTROMETRY [LARGE SCALE ANALYSIS]</scope>
    <source>
        <tissue>Cervix carcinoma</tissue>
        <tissue>Erythroleukemia</tissue>
    </source>
</reference>
<reference key="11">
    <citation type="journal article" date="2016" name="J. Biol. Chem.">
        <title>Substrate specificity of the HEMK2 protein glutamine methyltransferase and identification of novel substrates.</title>
        <authorList>
            <person name="Kusevic D."/>
            <person name="Kudithipudi S."/>
            <person name="Jeltsch A."/>
        </authorList>
    </citation>
    <scope>METHYLATION AT GLN-1338</scope>
    <scope>MUTAGENESIS OF GLN-1338</scope>
</reference>
<reference key="12">
    <citation type="journal article" date="2014" name="J. Neurol.">
        <title>Whole-exome sequencing in patients with inherited neuropathies: outcome and challenges.</title>
        <authorList>
            <person name="Schabhuettl M."/>
            <person name="Wieland T."/>
            <person name="Senderek J."/>
            <person name="Baets J."/>
            <person name="Timmerman V."/>
            <person name="De Jonghe P."/>
            <person name="Reilly M.M."/>
            <person name="Stieglbauer K."/>
            <person name="Laich E."/>
            <person name="Windhager R."/>
            <person name="Erwa W."/>
            <person name="Trajanoski S."/>
            <person name="Strom T.M."/>
            <person name="Auer-Grumbach M."/>
        </authorList>
    </citation>
    <scope>VARIANT HIS-227</scope>
</reference>
<proteinExistence type="evidence at protein level"/>
<name>ARHGA_HUMAN</name>
<comment type="function">
    <text evidence="5">May play a role in developmental myelination of peripheral nerves.</text>
</comment>
<comment type="interaction">
    <interactant intactId="EBI-2515636">
        <id>O15013</id>
    </interactant>
    <interactant intactId="EBI-3931791">
        <id>O15066</id>
        <label>KIF3B</label>
    </interactant>
    <organismsDiffer>false</organismsDiffer>
    <experiments>3</experiments>
</comment>
<comment type="alternative products">
    <event type="alternative splicing"/>
    <isoform>
        <id>O15013-1</id>
        <name>1</name>
        <sequence type="displayed"/>
    </isoform>
    <isoform>
        <id>O15013-6</id>
        <name>2</name>
        <sequence type="described" ref="VSP_040757"/>
    </isoform>
    <isoform>
        <id>O15013-7</id>
        <name>3</name>
        <sequence type="described" ref="VSP_040754 VSP_040756"/>
    </isoform>
    <isoform>
        <id>O15013-4</id>
        <name>4</name>
        <sequence type="described" ref="VSP_010704"/>
    </isoform>
    <isoform>
        <id>O15013-5</id>
        <name>5</name>
        <sequence type="described" ref="VSP_040754 VSP_040755"/>
    </isoform>
</comment>
<comment type="PTM">
    <text evidence="7">Methylated at Gln-1338 by N6AMT1.</text>
</comment>
<comment type="disease" evidence="5">
    <disease id="DI-02311">
        <name>Slowed nerve conduction velocity</name>
        <acronym>SNCV</acronym>
        <description>Affected individuals present a reduction in nerve conduction velocities without any clinical signs of peripheral or central nervous system dysfunction. SNCV inheritance is autosomal dominant.</description>
        <dbReference type="MIM" id="608236"/>
    </disease>
    <text>The disease is caused by variants affecting the gene represented in this entry.</text>
</comment>
<comment type="sequence caution" evidence="12">
    <conflict type="miscellaneous discrepancy">
        <sequence resource="EMBL-CDS" id="AAH36809"/>
    </conflict>
    <text>Probable cloning artifact.</text>
</comment>
<comment type="sequence caution" evidence="12">
    <conflict type="miscellaneous discrepancy">
        <sequence resource="EMBL-CDS" id="AAH40474"/>
    </conflict>
    <text>Probable cloning artifact.</text>
</comment>
<comment type="sequence caution" evidence="12">
    <conflict type="erroneous initiation">
        <sequence resource="EMBL-CDS" id="BAA20754"/>
    </conflict>
    <text>Extended N-terminus.</text>
</comment>
<comment type="sequence caution" evidence="12">
    <conflict type="erroneous termination">
        <sequence resource="EMBL-CDS" id="CAH18365"/>
    </conflict>
    <text>Truncated C-terminus.</text>
</comment>
<sequence length="1369" mass="151612">MRPPGFLSRAPSLNRAERGIWSCSMDQREPLPPAPAENEMKYDTNNNEEEEGEQFDFDSGDEIPEADRQAPSAPETGGAGASEAPAPTGGEDGAGAETTPVAEPTKLVLPMKVNPYSVIDITPFQEDQPPTPVPSAEEENVGLHVPCGYLVPVPCGYAVPSNLPLLLPAYSSPVIICATSLDEEAETPEVTEDRQPNSLSSEEPPTSEDQVGREDSALARWAADPANTAWMENPEEAIYDDVPRENSDSEPDEMIYDDVENGDEGGNSSLEYGWSSSEFESYEEQSDSECKNGIPRSFLRSNHKKQLSHDLTRLKEHYEKKMRDLMASTVGVVEIQQLRQKHELKMQKLVKAAKDGTKDGLERTRAAVKRGRSFIRTKSLIAQDHRSSLEEEQNLFIDVDCKHPEAILTPMPEGLSQQQVVRRYILGSVVDSEKNYVDALKRILEQYEKPLSEMEPKVLSERKLKTVFYRVKEILQCHSLFQIALASRVSEWDSVEMIGDVFVASFSKSMVLDAYSEYVNNFSTAVAVLKKTCATKPAFLEFLKQEQEASPDRTTLYSLMMKPIQRFPQFILLLQDMLKNTSKGHPDRLPLQMALTELETLAEKLNERKRDADQRCEVKQIAKAINERYLNKLLSSGSRYLIRSDDMIETVYNDRGEIVKTKERRVFMLNDVLMCATVSSRPSHDSRVMSSQRYLLKWSVPLGHVDAIEYGSSAGTGEHSRHLAVHPPESLAVVANAKPNKVYMGPGQLYQDLQNLLHDLNVIGQITQLIGNLKGNYQNLNQSVAHDWTSGLQRLILKKEDEIRAADCCRIQLQLPGKQDKSGRPTFFTAVFNTFTPAIKESWVNSLQMAKLALEEENHMGWFCVEDDGNHIKKEKHPLLVGHMPVMVAKQQEFKIECAAYNPEPYLNNESQPDSFSTAHGFLWIGSCTHQMGQIAIVSFQNSTPKVIECFNVESRILCMLYVPVEEKRREPGAPPDPETPAVRASDVPTICVGTEEGSISIYKSSQGSKKVRLQHFFTPEKSTVMSLACTSQSLYAGLVNGAVASYARAPDGSWDSEPQKVIKLGVLPVRSLLMMEDTLWAASGGQVFIISVETHAVEGQLEAHQEEGMVISHMAVSGVGIWIAFTSGSTLRLFHTETLKHLQDINIATPVHNMLPGHQRLSVTSLLVCHGLLMVGTSLGVLVALPVPRLQGIPKVTGRGMVSYHAHNSPVKFIVLATALHEKDKDKSRDSLAPGPEPQDEDQKDALPSGGAGSSLSQGDPDAAIWLGDSLGSMTQKSDLSSSSGSLSLSHGSSSLEHRSEDSTIYDLLKDPVSLRSKARRAKKAKASSALVVCGGQGHRRVHRKARQPHQEELAPTVMVWQIPLLNI</sequence>
<organism>
    <name type="scientific">Homo sapiens</name>
    <name type="common">Human</name>
    <dbReference type="NCBI Taxonomy" id="9606"/>
    <lineage>
        <taxon>Eukaryota</taxon>
        <taxon>Metazoa</taxon>
        <taxon>Chordata</taxon>
        <taxon>Craniata</taxon>
        <taxon>Vertebrata</taxon>
        <taxon>Euteleostomi</taxon>
        <taxon>Mammalia</taxon>
        <taxon>Eutheria</taxon>
        <taxon>Euarchontoglires</taxon>
        <taxon>Primates</taxon>
        <taxon>Haplorrhini</taxon>
        <taxon>Catarrhini</taxon>
        <taxon>Hominidae</taxon>
        <taxon>Homo</taxon>
    </lineage>
</organism>